<reference key="1">
    <citation type="journal article" date="1996" name="J. Bacteriol.">
        <title>The Bradyrhizobium japonicum rpoH1 gene encoding a sigma 32-like protein is part of a unique heat shock gene cluster together with groESL1 and three small heat shock genes.</title>
        <authorList>
            <person name="Narberhaus F."/>
            <person name="Weiglhofer W."/>
            <person name="Fischer H.-M."/>
            <person name="Hennecke H."/>
        </authorList>
    </citation>
    <scope>NUCLEOTIDE SEQUENCE [GENOMIC DNA]</scope>
</reference>
<reference key="2">
    <citation type="journal article" date="2002" name="DNA Res.">
        <title>Complete genomic sequence of nitrogen-fixing symbiotic bacterium Bradyrhizobium japonicum USDA110.</title>
        <authorList>
            <person name="Kaneko T."/>
            <person name="Nakamura Y."/>
            <person name="Sato S."/>
            <person name="Minamisawa K."/>
            <person name="Uchiumi T."/>
            <person name="Sasamoto S."/>
            <person name="Watanabe A."/>
            <person name="Idesawa K."/>
            <person name="Iriguchi M."/>
            <person name="Kawashima K."/>
            <person name="Kohara M."/>
            <person name="Matsumoto M."/>
            <person name="Shimpo S."/>
            <person name="Tsuruoka H."/>
            <person name="Wada T."/>
            <person name="Yamada M."/>
            <person name="Tabata S."/>
        </authorList>
    </citation>
    <scope>NUCLEOTIDE SEQUENCE [LARGE SCALE GENOMIC DNA]</scope>
    <source>
        <strain>JCM 10833 / BCRC 13528 / IAM 13628 / NBRC 14792 / USDA 110</strain>
    </source>
</reference>
<comment type="similarity">
    <text evidence="1">Belongs to the small heat shock protein (HSP20) family.</text>
</comment>
<feature type="chain" id="PRO_0000126044" description="Small heat shock protein HspB">
    <location>
        <begin position="1"/>
        <end position="153"/>
    </location>
</feature>
<feature type="domain" description="sHSP" evidence="1">
    <location>
        <begin position="30"/>
        <end position="140"/>
    </location>
</feature>
<proteinExistence type="inferred from homology"/>
<evidence type="ECO:0000255" key="1">
    <source>
        <dbReference type="PROSITE-ProRule" id="PRU00285"/>
    </source>
</evidence>
<name>HSPB_BRADU</name>
<gene>
    <name type="primary">hspB</name>
    <name type="ordered locus">blr5233</name>
</gene>
<dbReference type="EMBL" id="U55047">
    <property type="protein sequence ID" value="AAC44756.1"/>
    <property type="molecule type" value="Genomic_DNA"/>
</dbReference>
<dbReference type="EMBL" id="BA000040">
    <property type="protein sequence ID" value="BAC50498.1"/>
    <property type="molecule type" value="Genomic_DNA"/>
</dbReference>
<dbReference type="RefSeq" id="NP_771873.1">
    <property type="nucleotide sequence ID" value="NC_004463.1"/>
</dbReference>
<dbReference type="RefSeq" id="WP_011087989.1">
    <property type="nucleotide sequence ID" value="NZ_CP011360.1"/>
</dbReference>
<dbReference type="SMR" id="P70918"/>
<dbReference type="STRING" id="224911.AAV28_23540"/>
<dbReference type="EnsemblBacteria" id="BAC50498">
    <property type="protein sequence ID" value="BAC50498"/>
    <property type="gene ID" value="BAC50498"/>
</dbReference>
<dbReference type="GeneID" id="46492228"/>
<dbReference type="KEGG" id="bja:blr5233"/>
<dbReference type="PATRIC" id="fig|224911.44.peg.5119"/>
<dbReference type="eggNOG" id="COG0071">
    <property type="taxonomic scope" value="Bacteria"/>
</dbReference>
<dbReference type="HOGENOM" id="CLU_046737_4_2_5"/>
<dbReference type="InParanoid" id="P70918"/>
<dbReference type="OrthoDB" id="9810618at2"/>
<dbReference type="PhylomeDB" id="P70918"/>
<dbReference type="Proteomes" id="UP000002526">
    <property type="component" value="Chromosome"/>
</dbReference>
<dbReference type="GO" id="GO:0005737">
    <property type="term" value="C:cytoplasm"/>
    <property type="evidence" value="ECO:0000318"/>
    <property type="project" value="GO_Central"/>
</dbReference>
<dbReference type="CDD" id="cd06470">
    <property type="entry name" value="ACD_IbpA-B_like"/>
    <property type="match status" value="1"/>
</dbReference>
<dbReference type="Gene3D" id="2.60.40.790">
    <property type="match status" value="1"/>
</dbReference>
<dbReference type="InterPro" id="IPR002068">
    <property type="entry name" value="A-crystallin/Hsp20_dom"/>
</dbReference>
<dbReference type="InterPro" id="IPR037913">
    <property type="entry name" value="ACD_IbpA/B"/>
</dbReference>
<dbReference type="InterPro" id="IPR008978">
    <property type="entry name" value="HSP20-like_chaperone"/>
</dbReference>
<dbReference type="PANTHER" id="PTHR47062">
    <property type="match status" value="1"/>
</dbReference>
<dbReference type="PANTHER" id="PTHR47062:SF1">
    <property type="entry name" value="SMALL HEAT SHOCK PROTEIN IBPA"/>
    <property type="match status" value="1"/>
</dbReference>
<dbReference type="Pfam" id="PF00011">
    <property type="entry name" value="HSP20"/>
    <property type="match status" value="1"/>
</dbReference>
<dbReference type="SUPFAM" id="SSF49764">
    <property type="entry name" value="HSP20-like chaperones"/>
    <property type="match status" value="1"/>
</dbReference>
<dbReference type="PROSITE" id="PS01031">
    <property type="entry name" value="SHSP"/>
    <property type="match status" value="1"/>
</dbReference>
<protein>
    <recommendedName>
        <fullName>Small heat shock protein HspB</fullName>
    </recommendedName>
</protein>
<organism>
    <name type="scientific">Bradyrhizobium diazoefficiens (strain JCM 10833 / BCRC 13528 / IAM 13628 / NBRC 14792 / USDA 110)</name>
    <dbReference type="NCBI Taxonomy" id="224911"/>
    <lineage>
        <taxon>Bacteria</taxon>
        <taxon>Pseudomonadati</taxon>
        <taxon>Pseudomonadota</taxon>
        <taxon>Alphaproteobacteria</taxon>
        <taxon>Hyphomicrobiales</taxon>
        <taxon>Nitrobacteraceae</taxon>
        <taxon>Bradyrhizobium</taxon>
    </lineage>
</organism>
<sequence>MRTTYDFAPLWRSTIGFDRLFDLVDAAQQAGTEDNYPPCNVERLSEDRYQISLAVAGFSADEIAITAEQSVLTVEGRKSEKQQREFLYQGISSRPFKRQFNLADYVQVKGASFDNGLLQIELVREIPEAMKPRRISISGSSASNVRQIDGKAA</sequence>
<keyword id="KW-1185">Reference proteome</keyword>
<keyword id="KW-0346">Stress response</keyword>
<accession>P70918</accession>